<organism>
    <name type="scientific">Pongo abelii</name>
    <name type="common">Sumatran orangutan</name>
    <name type="synonym">Pongo pygmaeus abelii</name>
    <dbReference type="NCBI Taxonomy" id="9601"/>
    <lineage>
        <taxon>Eukaryota</taxon>
        <taxon>Metazoa</taxon>
        <taxon>Chordata</taxon>
        <taxon>Craniata</taxon>
        <taxon>Vertebrata</taxon>
        <taxon>Euteleostomi</taxon>
        <taxon>Mammalia</taxon>
        <taxon>Eutheria</taxon>
        <taxon>Euarchontoglires</taxon>
        <taxon>Primates</taxon>
        <taxon>Haplorrhini</taxon>
        <taxon>Catarrhini</taxon>
        <taxon>Hominidae</taxon>
        <taxon>Pongo</taxon>
    </lineage>
</organism>
<comment type="function">
    <text evidence="1">Acts as a component of the retromer cargo-selective complex (CSC). The CSC is believed to be the core functional component of retromer or respective retromer complex variants acting to prevent missorting of selected transmembrane cargo proteins into the lysosomal degradation pathway. The recruitment of the CSC to the endosomal membrane involves RAB7A and SNX3. The SNX-BAR retromer mediates retrograde transport of cargo proteins from endosomes to the trans-Golgi network (TGN) and is involved in endosome-to-plasma membrane transport for cargo protein recycling. The SNX3-retromer mediates the retrograde transport of WLS distinct from the SNX-BAR retromer pathway. The SNX27-retromer is believed to be involved in endosome-to-plasma membrane trafficking and recycling of a broad spectrum of cargo proteins. The CSC seems to act as recruitment hub for other proteins, such as the WASH complex and TBC1D5. May be involved in retrograde transport of SORT1 but not of IGF2R. Acts redundantly with VSP26A in SNX-27 mediated endocytic recycling of SLC2A1/GLUT1 (By similarity).</text>
</comment>
<comment type="subunit">
    <text evidence="2 4">Component of the heterotrimeric retromer cargo-selective complex (CSC), also described as vacuolar protein sorting subcomplex (VPS), formed by VPS26 (VPS26A or VPS26B), VPS29 and VPS35. The CSC has a highly elongated structure with VPS26 and VPS29 binding independently at opposite distal ends of VPS35 as central platform. The CSC is believed to associate with variable sorting nexins to form functionally distinct retromer complex variants. The originally described SNX-BAR retromer is a pentamer containing the CSC and a heterodimeric membrane-deforming subcomplex formed between SNX1 or SNX2 and SNX5 or SNX6 (also called SNX-BAR subcomplex); the respective CSC and SNX-BAR subcomplexes associate with low affinity. The CSC associates with SNX3 to form a SNX3-retromer complex. The CSC associates with SNX27, the WASH complex and the SNX-BAR subcomplex to form the SNX27-retromer complex. Interacts with VPS29, VPS35, TBC1D5, GOLPH3, SNX27 (By similarity).</text>
</comment>
<comment type="subcellular location">
    <subcellularLocation>
        <location evidence="4">Cytoplasm</location>
    </subcellularLocation>
    <subcellularLocation>
        <location>Membrane</location>
        <topology evidence="4">Peripheral membrane protein</topology>
    </subcellularLocation>
    <subcellularLocation>
        <location evidence="4">Early endosome</location>
    </subcellularLocation>
    <subcellularLocation>
        <location evidence="4">Late endosome</location>
    </subcellularLocation>
</comment>
<comment type="similarity">
    <text evidence="5">Belongs to the VPS26 family.</text>
</comment>
<protein>
    <recommendedName>
        <fullName>Vacuolar protein sorting-associated protein 26B</fullName>
    </recommendedName>
    <alternativeName>
        <fullName>Vesicle protein sorting 26B</fullName>
    </alternativeName>
</protein>
<gene>
    <name type="primary">VPS26B</name>
</gene>
<feature type="chain" id="PRO_0000247091" description="Vacuolar protein sorting-associated protein 26B">
    <location>
        <begin position="1"/>
        <end position="336"/>
    </location>
</feature>
<feature type="modified residue" description="Phosphoserine" evidence="3">
    <location>
        <position position="302"/>
    </location>
</feature>
<feature type="modified residue" description="Phosphoserine" evidence="3">
    <location>
        <position position="304"/>
    </location>
</feature>
<feature type="modified residue" description="Phosphoserine" evidence="3">
    <location>
        <position position="319"/>
    </location>
</feature>
<proteinExistence type="evidence at transcript level"/>
<accession>Q5R436</accession>
<sequence>MSFFGFGQSVEVEILLNDAESRKRAEHKTEDGKKEKYFLFYDGETVSGKVGLALKNPNKRLEHQGIKIEFIGQIELYYDRGNHHEFVSLVKDLARPGEITQSQAFDFEFTHVEKPYESYTGQNVKLRYFLRATISRRLNDVVKEMDIVVHTLSTYPELNSSIKMEVGIEDCLHIEFEYNKSKYHLKDVIVGKIYFLLVRIKIKHMEIDIIKRETTGTGPNVYHENVTIAKYEIMDGAPVRGESIPIRLFLAGYELTPTMRDINKKFSVRYYLNLVLIDEEERRYFKQQEVVLWRKGDIVRKSMSHQAAIASQRFEGTTSLGEVRTPSQLSDNNCRQ</sequence>
<dbReference type="EMBL" id="CR861424">
    <property type="protein sequence ID" value="CAH93480.1"/>
    <property type="molecule type" value="mRNA"/>
</dbReference>
<dbReference type="SMR" id="Q5R436"/>
<dbReference type="STRING" id="9601.ENSPPYP00000004656"/>
<dbReference type="eggNOG" id="KOG3063">
    <property type="taxonomic scope" value="Eukaryota"/>
</dbReference>
<dbReference type="InParanoid" id="Q5R436"/>
<dbReference type="Proteomes" id="UP000001595">
    <property type="component" value="Unplaced"/>
</dbReference>
<dbReference type="GO" id="GO:0005769">
    <property type="term" value="C:early endosome"/>
    <property type="evidence" value="ECO:0000250"/>
    <property type="project" value="UniProtKB"/>
</dbReference>
<dbReference type="GO" id="GO:0005770">
    <property type="term" value="C:late endosome"/>
    <property type="evidence" value="ECO:0000250"/>
    <property type="project" value="UniProtKB"/>
</dbReference>
<dbReference type="GO" id="GO:0016020">
    <property type="term" value="C:membrane"/>
    <property type="evidence" value="ECO:0007669"/>
    <property type="project" value="UniProtKB-SubCell"/>
</dbReference>
<dbReference type="GO" id="GO:0006886">
    <property type="term" value="P:intracellular protein transport"/>
    <property type="evidence" value="ECO:0007669"/>
    <property type="project" value="InterPro"/>
</dbReference>
<dbReference type="FunFam" id="2.60.40.640:FF:000001">
    <property type="entry name" value="Vacuolar protein sorting-associated protein 26A"/>
    <property type="match status" value="1"/>
</dbReference>
<dbReference type="FunFam" id="2.60.40.640:FF:000002">
    <property type="entry name" value="Vacuolar protein sorting-associated protein 26A"/>
    <property type="match status" value="1"/>
</dbReference>
<dbReference type="Gene3D" id="2.60.40.640">
    <property type="match status" value="2"/>
</dbReference>
<dbReference type="InterPro" id="IPR014752">
    <property type="entry name" value="Arrestin-like_C"/>
</dbReference>
<dbReference type="InterPro" id="IPR028934">
    <property type="entry name" value="Vps26-related"/>
</dbReference>
<dbReference type="PANTHER" id="PTHR12233">
    <property type="entry name" value="VACUOLAR PROTEIN SORTING 26 RELATED"/>
    <property type="match status" value="1"/>
</dbReference>
<dbReference type="Pfam" id="PF03643">
    <property type="entry name" value="Vps26"/>
    <property type="match status" value="1"/>
</dbReference>
<name>VP26B_PONAB</name>
<keyword id="KW-0963">Cytoplasm</keyword>
<keyword id="KW-0967">Endosome</keyword>
<keyword id="KW-0472">Membrane</keyword>
<keyword id="KW-0597">Phosphoprotein</keyword>
<keyword id="KW-0653">Protein transport</keyword>
<keyword id="KW-1185">Reference proteome</keyword>
<keyword id="KW-0813">Transport</keyword>
<evidence type="ECO:0000250" key="1"/>
<evidence type="ECO:0000250" key="2">
    <source>
        <dbReference type="UniProtKB" id="O75436"/>
    </source>
</evidence>
<evidence type="ECO:0000250" key="3">
    <source>
        <dbReference type="UniProtKB" id="Q4G0F5"/>
    </source>
</evidence>
<evidence type="ECO:0000250" key="4">
    <source>
        <dbReference type="UniProtKB" id="Q8C0E2"/>
    </source>
</evidence>
<evidence type="ECO:0000305" key="5"/>
<reference key="1">
    <citation type="submission" date="2004-11" db="EMBL/GenBank/DDBJ databases">
        <authorList>
            <consortium name="The German cDNA consortium"/>
        </authorList>
    </citation>
    <scope>NUCLEOTIDE SEQUENCE [LARGE SCALE MRNA]</scope>
    <source>
        <tissue>Brain cortex</tissue>
    </source>
</reference>